<name>BCHP_RHOCB</name>
<feature type="chain" id="PRO_0000219665" description="Geranylgeranyl diphosphate reductase">
    <location>
        <begin position="1"/>
        <end position="391"/>
    </location>
</feature>
<proteinExistence type="inferred from homology"/>
<dbReference type="EC" id="1.3.1.83"/>
<dbReference type="EMBL" id="Z11165">
    <property type="protein sequence ID" value="CAA77534.1"/>
    <property type="molecule type" value="Genomic_DNA"/>
</dbReference>
<dbReference type="EMBL" id="CP001312">
    <property type="protein sequence ID" value="ADE84438.1"/>
    <property type="molecule type" value="Genomic_DNA"/>
</dbReference>
<dbReference type="PIR" id="S17818">
    <property type="entry name" value="S17818"/>
</dbReference>
<dbReference type="RefSeq" id="WP_013066417.1">
    <property type="nucleotide sequence ID" value="NC_014034.1"/>
</dbReference>
<dbReference type="SMR" id="P26172"/>
<dbReference type="STRING" id="272942.RCAP_rcc00673"/>
<dbReference type="GeneID" id="31489619"/>
<dbReference type="KEGG" id="rcp:RCAP_rcc00673"/>
<dbReference type="eggNOG" id="COG0644">
    <property type="taxonomic scope" value="Bacteria"/>
</dbReference>
<dbReference type="HOGENOM" id="CLU_024648_3_1_5"/>
<dbReference type="OrthoDB" id="417034at2"/>
<dbReference type="BioCyc" id="MetaCyc:MONOMER-13251"/>
<dbReference type="UniPathway" id="UPA00671"/>
<dbReference type="Proteomes" id="UP000002361">
    <property type="component" value="Chromosome"/>
</dbReference>
<dbReference type="GO" id="GO:0071949">
    <property type="term" value="F:FAD binding"/>
    <property type="evidence" value="ECO:0007669"/>
    <property type="project" value="InterPro"/>
</dbReference>
<dbReference type="GO" id="GO:0102067">
    <property type="term" value="F:geranylgeranyl diphosphate reductase activity"/>
    <property type="evidence" value="ECO:0007669"/>
    <property type="project" value="UniProtKB-EC"/>
</dbReference>
<dbReference type="GO" id="GO:0045550">
    <property type="term" value="F:geranylgeranyl reductase activity"/>
    <property type="evidence" value="ECO:0007669"/>
    <property type="project" value="InterPro"/>
</dbReference>
<dbReference type="GO" id="GO:0036070">
    <property type="term" value="P:light-independent bacteriochlorophyll biosynthetic process"/>
    <property type="evidence" value="ECO:0007669"/>
    <property type="project" value="UniProtKB-UniPathway"/>
</dbReference>
<dbReference type="GO" id="GO:0015979">
    <property type="term" value="P:photosynthesis"/>
    <property type="evidence" value="ECO:0007669"/>
    <property type="project" value="UniProtKB-KW"/>
</dbReference>
<dbReference type="FunFam" id="3.50.50.60:FF:000083">
    <property type="entry name" value="Geranylgeranyl diphosphate reductase"/>
    <property type="match status" value="1"/>
</dbReference>
<dbReference type="Gene3D" id="3.50.50.60">
    <property type="entry name" value="FAD/NAD(P)-binding domain"/>
    <property type="match status" value="1"/>
</dbReference>
<dbReference type="InterPro" id="IPR010253">
    <property type="entry name" value="BchP_ChlP_pln/prok"/>
</dbReference>
<dbReference type="InterPro" id="IPR002938">
    <property type="entry name" value="FAD-bd"/>
</dbReference>
<dbReference type="InterPro" id="IPR036188">
    <property type="entry name" value="FAD/NAD-bd_sf"/>
</dbReference>
<dbReference type="InterPro" id="IPR011777">
    <property type="entry name" value="Geranylgeranyl_Rdtase_fam"/>
</dbReference>
<dbReference type="InterPro" id="IPR050407">
    <property type="entry name" value="Geranylgeranyl_reductase"/>
</dbReference>
<dbReference type="NCBIfam" id="TIGR02023">
    <property type="entry name" value="BchP-ChlP"/>
    <property type="match status" value="1"/>
</dbReference>
<dbReference type="NCBIfam" id="TIGR02032">
    <property type="entry name" value="GG-red-SF"/>
    <property type="match status" value="1"/>
</dbReference>
<dbReference type="PANTHER" id="PTHR42685">
    <property type="entry name" value="GERANYLGERANYL DIPHOSPHATE REDUCTASE"/>
    <property type="match status" value="1"/>
</dbReference>
<dbReference type="PANTHER" id="PTHR42685:SF4">
    <property type="entry name" value="GERANYLGERANYL DIPHOSPHATE REDUCTASE, CHLOROPLASTIC"/>
    <property type="match status" value="1"/>
</dbReference>
<dbReference type="Pfam" id="PF01494">
    <property type="entry name" value="FAD_binding_3"/>
    <property type="match status" value="1"/>
</dbReference>
<dbReference type="Pfam" id="PF13450">
    <property type="entry name" value="NAD_binding_8"/>
    <property type="match status" value="1"/>
</dbReference>
<dbReference type="PRINTS" id="PR00420">
    <property type="entry name" value="RNGMNOXGNASE"/>
</dbReference>
<dbReference type="SUPFAM" id="SSF51905">
    <property type="entry name" value="FAD/NAD(P)-binding domain"/>
    <property type="match status" value="1"/>
</dbReference>
<accession>P26172</accession>
<accession>D5ANT4</accession>
<protein>
    <recommendedName>
        <fullName>Geranylgeranyl diphosphate reductase</fullName>
        <ecNumber>1.3.1.83</ecNumber>
    </recommendedName>
    <alternativeName>
        <fullName>Geranylgeranyl reductase</fullName>
    </alternativeName>
</protein>
<organism>
    <name type="scientific">Rhodobacter capsulatus (strain ATCC BAA-309 / NBRC 16581 / SB1003)</name>
    <dbReference type="NCBI Taxonomy" id="272942"/>
    <lineage>
        <taxon>Bacteria</taxon>
        <taxon>Pseudomonadati</taxon>
        <taxon>Pseudomonadota</taxon>
        <taxon>Alphaproteobacteria</taxon>
        <taxon>Rhodobacterales</taxon>
        <taxon>Rhodobacter group</taxon>
        <taxon>Rhodobacter</taxon>
    </lineage>
</organism>
<sequence length="391" mass="43245">MKYDAFVVGGGPAGSTAAWDMARAGLKVALLDRAGRIKPCGGAIPPRLIRDFDIPDHLLVAKITSARMISPTGRFVDIPIENGFVGMVDREDYDEWLRERAGKAGAERLTGTWLRIERDSGKTVVVWRDKVTGEEMKAETRVVIGADGANSQVRNEVPATKIPLVFAYHEIIKAPTTVANYDPTRCDVYYDGRISPDFYGWVFPHGKTASIGMGTELPDVSLKDCTTLLRQMSGLDKEETIRKEGAPIPLQPLDVWDNGKDVVLSGDAAGVVAPSSGEGIYYAHAGGRYAAEAAMAFLKSGKPADLKLARAGFMKEHGTVFKVLRMMQDKYYHSDDRRERFVSLCHDVDVQRMTFESYMNKKMTKFQPLKNLKIGFKNLAHLSGLVPPQWT</sequence>
<reference key="1">
    <citation type="submission" date="1991-11" db="EMBL/GenBank/DDBJ databases">
        <authorList>
            <person name="Burke D.H."/>
            <person name="Alberti M."/>
            <person name="Armstrong G.A."/>
            <person name="Hearst J.E."/>
        </authorList>
    </citation>
    <scope>NUCLEOTIDE SEQUENCE [GENOMIC DNA]</scope>
    <source>
        <strain>ATCC BAA-309 / NBRC 16581 / SB1003</strain>
    </source>
</reference>
<reference key="2">
    <citation type="journal article" date="2010" name="J. Bacteriol.">
        <title>Complete genome sequence of the photosynthetic purple nonsulfur bacterium Rhodobacter capsulatus SB 1003.</title>
        <authorList>
            <person name="Strnad H."/>
            <person name="Lapidus A."/>
            <person name="Paces J."/>
            <person name="Ulbrich P."/>
            <person name="Vlcek C."/>
            <person name="Paces V."/>
            <person name="Haselkorn R."/>
        </authorList>
    </citation>
    <scope>NUCLEOTIDE SEQUENCE [LARGE SCALE GENOMIC DNA]</scope>
    <source>
        <strain>ATCC BAA-309 / NBRC 16581 / SB1003</strain>
    </source>
</reference>
<gene>
    <name type="primary">bchP</name>
    <name type="ordered locus">RCAP_rcc00673</name>
</gene>
<evidence type="ECO:0000250" key="1"/>
<evidence type="ECO:0000305" key="2"/>
<keyword id="KW-0077">Bacteriochlorophyll biosynthesis</keyword>
<keyword id="KW-0149">Chlorophyll biosynthesis</keyword>
<keyword id="KW-0521">NADP</keyword>
<keyword id="KW-0560">Oxidoreductase</keyword>
<keyword id="KW-0602">Photosynthesis</keyword>
<keyword id="KW-1185">Reference proteome</keyword>
<comment type="function">
    <text evidence="1">Catalyzes the stepwise hydrogenation of geranylgeraniol to phytol during bacteriochlorophyll A (BchlA) biosynthesis.</text>
</comment>
<comment type="catalytic activity">
    <reaction>
        <text>phytyl diphosphate + 3 NADP(+) = geranylgeranyl diphosphate + 3 NADPH + 3 H(+)</text>
        <dbReference type="Rhea" id="RHEA:26229"/>
        <dbReference type="ChEBI" id="CHEBI:15378"/>
        <dbReference type="ChEBI" id="CHEBI:57533"/>
        <dbReference type="ChEBI" id="CHEBI:57783"/>
        <dbReference type="ChEBI" id="CHEBI:58349"/>
        <dbReference type="ChEBI" id="CHEBI:75434"/>
        <dbReference type="EC" id="1.3.1.83"/>
    </reaction>
</comment>
<comment type="pathway">
    <text>Porphyrin-containing compound metabolism; bacteriochlorophyll biosynthesis (light-independent).</text>
</comment>
<comment type="similarity">
    <text evidence="2">Belongs to the geranylgeranyl reductase family. ChlP subfamily.</text>
</comment>